<dbReference type="EMBL" id="GL377688">
    <property type="protein sequence ID" value="EFJ07180.1"/>
    <property type="molecule type" value="Genomic_DNA"/>
</dbReference>
<dbReference type="EMBL" id="FE444772">
    <property type="status" value="NOT_ANNOTATED_CDS"/>
    <property type="molecule type" value="mRNA"/>
</dbReference>
<dbReference type="SMR" id="D8T829"/>
<dbReference type="FunCoup" id="D8T829">
    <property type="interactions" value="656"/>
</dbReference>
<dbReference type="EnsemblPlants" id="EFJ07180">
    <property type="protein sequence ID" value="EFJ07180"/>
    <property type="gene ID" value="SELMODRAFT_272229"/>
</dbReference>
<dbReference type="Gramene" id="EFJ07180">
    <property type="protein sequence ID" value="EFJ07180"/>
    <property type="gene ID" value="SELMODRAFT_272229"/>
</dbReference>
<dbReference type="KEGG" id="smo:SELMODRAFT_272229"/>
<dbReference type="HOGENOM" id="CLU_066104_0_1_1"/>
<dbReference type="InParanoid" id="D8T829"/>
<dbReference type="OMA" id="HNGECLK"/>
<dbReference type="OrthoDB" id="689701at2759"/>
<dbReference type="Proteomes" id="UP000001514">
    <property type="component" value="Unassembled WGS sequence"/>
</dbReference>
<dbReference type="GO" id="GO:0005886">
    <property type="term" value="C:plasma membrane"/>
    <property type="evidence" value="ECO:0007669"/>
    <property type="project" value="UniProtKB-SubCell"/>
</dbReference>
<dbReference type="InterPro" id="IPR006459">
    <property type="entry name" value="CASP/CASPL"/>
</dbReference>
<dbReference type="InterPro" id="IPR006702">
    <property type="entry name" value="CASP_dom"/>
</dbReference>
<dbReference type="NCBIfam" id="TIGR01569">
    <property type="entry name" value="A_tha_TIGR01569"/>
    <property type="match status" value="1"/>
</dbReference>
<dbReference type="PANTHER" id="PTHR33573:SF30">
    <property type="entry name" value="CASP-LIKE PROTEIN 2C1-RELATED"/>
    <property type="match status" value="1"/>
</dbReference>
<dbReference type="PANTHER" id="PTHR33573">
    <property type="entry name" value="CASP-LIKE PROTEIN 4A4"/>
    <property type="match status" value="1"/>
</dbReference>
<dbReference type="Pfam" id="PF04535">
    <property type="entry name" value="CASP_dom"/>
    <property type="match status" value="1"/>
</dbReference>
<gene>
    <name type="ORF">SELMODRAFT_272229</name>
</gene>
<protein>
    <recommendedName>
        <fullName>CASP-like protein 2U5</fullName>
        <shortName>SmCASPL2U5</shortName>
    </recommendedName>
</protein>
<keyword id="KW-1003">Cell membrane</keyword>
<keyword id="KW-0325">Glycoprotein</keyword>
<keyword id="KW-0472">Membrane</keyword>
<keyword id="KW-1185">Reference proteome</keyword>
<keyword id="KW-0812">Transmembrane</keyword>
<keyword id="KW-1133">Transmembrane helix</keyword>
<comment type="subunit">
    <text evidence="1">Homodimer and heterodimers.</text>
</comment>
<comment type="subcellular location">
    <subcellularLocation>
        <location evidence="1">Cell membrane</location>
        <topology evidence="1">Multi-pass membrane protein</topology>
    </subcellularLocation>
</comment>
<comment type="similarity">
    <text evidence="3">Belongs to the Casparian strip membrane proteins (CASP) family.</text>
</comment>
<reference key="1">
    <citation type="journal article" date="2011" name="Science">
        <title>The Selaginella genome identifies genetic changes associated with the evolution of vascular plants.</title>
        <authorList>
            <person name="Banks J.A."/>
            <person name="Nishiyama T."/>
            <person name="Hasebe M."/>
            <person name="Bowman J.L."/>
            <person name="Gribskov M."/>
            <person name="dePamphilis C."/>
            <person name="Albert V.A."/>
            <person name="Aono N."/>
            <person name="Aoyama T."/>
            <person name="Ambrose B.A."/>
            <person name="Ashton N.W."/>
            <person name="Axtell M.J."/>
            <person name="Barker E."/>
            <person name="Barker M.S."/>
            <person name="Bennetzen J.L."/>
            <person name="Bonawitz N.D."/>
            <person name="Chapple C."/>
            <person name="Cheng C."/>
            <person name="Correa L.G."/>
            <person name="Dacre M."/>
            <person name="DeBarry J."/>
            <person name="Dreyer I."/>
            <person name="Elias M."/>
            <person name="Engstrom E.M."/>
            <person name="Estelle M."/>
            <person name="Feng L."/>
            <person name="Finet C."/>
            <person name="Floyd S.K."/>
            <person name="Frommer W.B."/>
            <person name="Fujita T."/>
            <person name="Gramzow L."/>
            <person name="Gutensohn M."/>
            <person name="Harholt J."/>
            <person name="Hattori M."/>
            <person name="Heyl A."/>
            <person name="Hirai T."/>
            <person name="Hiwatashi Y."/>
            <person name="Ishikawa M."/>
            <person name="Iwata M."/>
            <person name="Karol K.G."/>
            <person name="Koehler B."/>
            <person name="Kolukisaoglu U."/>
            <person name="Kubo M."/>
            <person name="Kurata T."/>
            <person name="Lalonde S."/>
            <person name="Li K."/>
            <person name="Li Y."/>
            <person name="Litt A."/>
            <person name="Lyons E."/>
            <person name="Manning G."/>
            <person name="Maruyama T."/>
            <person name="Michael T.P."/>
            <person name="Mikami K."/>
            <person name="Miyazaki S."/>
            <person name="Morinaga S."/>
            <person name="Murata T."/>
            <person name="Mueller-Roeber B."/>
            <person name="Nelson D.R."/>
            <person name="Obara M."/>
            <person name="Oguri Y."/>
            <person name="Olmstead R.G."/>
            <person name="Onodera N."/>
            <person name="Petersen B.L."/>
            <person name="Pils B."/>
            <person name="Prigge M."/>
            <person name="Rensing S.A."/>
            <person name="Riano-Pachon D.M."/>
            <person name="Roberts A.W."/>
            <person name="Sato Y."/>
            <person name="Scheller H.V."/>
            <person name="Schulz B."/>
            <person name="Schulz C."/>
            <person name="Shakirov E.V."/>
            <person name="Shibagaki N."/>
            <person name="Shinohara N."/>
            <person name="Shippen D.E."/>
            <person name="Soerensen I."/>
            <person name="Sotooka R."/>
            <person name="Sugimoto N."/>
            <person name="Sugita M."/>
            <person name="Sumikawa N."/>
            <person name="Tanurdzic M."/>
            <person name="Theissen G."/>
            <person name="Ulvskov P."/>
            <person name="Wakazuki S."/>
            <person name="Weng J.K."/>
            <person name="Willats W.W."/>
            <person name="Wipf D."/>
            <person name="Wolf P.G."/>
            <person name="Yang L."/>
            <person name="Zimmer A.D."/>
            <person name="Zhu Q."/>
            <person name="Mitros T."/>
            <person name="Hellsten U."/>
            <person name="Loque D."/>
            <person name="Otillar R."/>
            <person name="Salamov A."/>
            <person name="Schmutz J."/>
            <person name="Shapiro H."/>
            <person name="Lindquist E."/>
            <person name="Lucas S."/>
            <person name="Rokhsar D."/>
            <person name="Grigoriev I.V."/>
        </authorList>
    </citation>
    <scope>NUCLEOTIDE SEQUENCE [LARGE SCALE GENOMIC DNA]</scope>
</reference>
<reference key="2">
    <citation type="submission" date="2008-03" db="EMBL/GenBank/DDBJ databases">
        <title>DOE Joint Genome Institute Selaginella moellendorffii EST project.</title>
        <authorList>
            <person name="Richardson P."/>
            <person name="Lucas S."/>
            <person name="Rokhsar D."/>
            <person name="Wang M."/>
            <person name="Lindquist E.A."/>
        </authorList>
    </citation>
    <scope>NUCLEOTIDE SEQUENCE [LARGE SCALE MRNA]</scope>
</reference>
<reference key="3">
    <citation type="journal article" date="2014" name="Plant Physiol.">
        <title>Functional and evolutionary analysis of the CASPARIAN STRIP MEMBRANE DOMAIN PROTEIN family.</title>
        <authorList>
            <person name="Roppolo D."/>
            <person name="Boeckmann B."/>
            <person name="Pfister A."/>
            <person name="Boutet E."/>
            <person name="Rubio M.C."/>
            <person name="Denervaud-Tendon V."/>
            <person name="Vermeer J.E."/>
            <person name="Gheyselinck J."/>
            <person name="Xenarios I."/>
            <person name="Geldner N."/>
        </authorList>
    </citation>
    <scope>GENE FAMILY</scope>
    <scope>NOMENCLATURE</scope>
</reference>
<sequence length="203" mass="21751">MSEHRIPVAADKQISPPISAGEQKGCKGLKRTDLMLRFAAFVCCAVTMVVLITDKQTSAIQVPGFNNLTITKTVSFDLAKAFVYLVSAAGIGAGYTLLVLVLSIISAERSKAIAWFIFVFDQLITYVLLAAAAASTEVAYMGAHAPPEASWLKVCSLFGRFCHQLGASLVTSFISTVLFAFSAAISAYYLFSNTNVRPAYSKG</sequence>
<evidence type="ECO:0000250" key="1"/>
<evidence type="ECO:0000255" key="2"/>
<evidence type="ECO:0000305" key="3"/>
<feature type="chain" id="PRO_0000412049" description="CASP-like protein 2U5">
    <location>
        <begin position="1"/>
        <end position="203"/>
    </location>
</feature>
<feature type="topological domain" description="Cytoplasmic" evidence="2">
    <location>
        <begin position="1"/>
        <end position="31"/>
    </location>
</feature>
<feature type="transmembrane region" description="Helical" evidence="2">
    <location>
        <begin position="32"/>
        <end position="52"/>
    </location>
</feature>
<feature type="topological domain" description="Extracellular" evidence="2">
    <location>
        <begin position="53"/>
        <end position="84"/>
    </location>
</feature>
<feature type="transmembrane region" description="Helical" evidence="2">
    <location>
        <begin position="85"/>
        <end position="105"/>
    </location>
</feature>
<feature type="topological domain" description="Cytoplasmic" evidence="2">
    <location>
        <begin position="106"/>
        <end position="111"/>
    </location>
</feature>
<feature type="transmembrane region" description="Helical" evidence="2">
    <location>
        <begin position="112"/>
        <end position="132"/>
    </location>
</feature>
<feature type="topological domain" description="Extracellular" evidence="2">
    <location>
        <begin position="133"/>
        <end position="164"/>
    </location>
</feature>
<feature type="transmembrane region" description="Helical" evidence="2">
    <location>
        <begin position="165"/>
        <end position="185"/>
    </location>
</feature>
<feature type="topological domain" description="Cytoplasmic" evidence="2">
    <location>
        <begin position="186"/>
        <end position="203"/>
    </location>
</feature>
<feature type="glycosylation site" description="N-linked (GlcNAc...) asparagine" evidence="2">
    <location>
        <position position="67"/>
    </location>
</feature>
<proteinExistence type="evidence at transcript level"/>
<accession>D8T829</accession>
<organism>
    <name type="scientific">Selaginella moellendorffii</name>
    <name type="common">Spikemoss</name>
    <dbReference type="NCBI Taxonomy" id="88036"/>
    <lineage>
        <taxon>Eukaryota</taxon>
        <taxon>Viridiplantae</taxon>
        <taxon>Streptophyta</taxon>
        <taxon>Embryophyta</taxon>
        <taxon>Tracheophyta</taxon>
        <taxon>Lycopodiopsida</taxon>
        <taxon>Selaginellales</taxon>
        <taxon>Selaginellaceae</taxon>
        <taxon>Selaginella</taxon>
    </lineage>
</organism>
<name>CSPL2_SELML</name>